<sequence>ETISFNFNQFQQND</sequence>
<dbReference type="PIR" id="PA0007">
    <property type="entry name" value="PA0007"/>
</dbReference>
<dbReference type="GO" id="GO:0030246">
    <property type="term" value="F:carbohydrate binding"/>
    <property type="evidence" value="ECO:0007669"/>
    <property type="project" value="UniProtKB-KW"/>
</dbReference>
<proteinExistence type="evidence at protein level"/>
<reference key="1">
    <citation type="journal article" date="1988" name="Phytochemistry">
        <title>Isolation and characterization of the lectins from the seeds of Psophocarpus scandens.</title>
        <authorList>
            <person name="Kortt A.A."/>
        </authorList>
    </citation>
    <scope>PROTEIN SEQUENCE</scope>
    <source>
        <tissue>Seed</tissue>
    </source>
</reference>
<protein>
    <recommendedName>
        <fullName>Basic lectin B1</fullName>
    </recommendedName>
</protein>
<organism>
    <name type="scientific">Psophocarpus scandens</name>
    <name type="common">Tropical African winged-bean</name>
    <dbReference type="NCBI Taxonomy" id="3890"/>
    <lineage>
        <taxon>Eukaryota</taxon>
        <taxon>Viridiplantae</taxon>
        <taxon>Streptophyta</taxon>
        <taxon>Embryophyta</taxon>
        <taxon>Tracheophyta</taxon>
        <taxon>Spermatophyta</taxon>
        <taxon>Magnoliopsida</taxon>
        <taxon>eudicotyledons</taxon>
        <taxon>Gunneridae</taxon>
        <taxon>Pentapetalae</taxon>
        <taxon>rosids</taxon>
        <taxon>fabids</taxon>
        <taxon>Fabales</taxon>
        <taxon>Fabaceae</taxon>
        <taxon>Papilionoideae</taxon>
        <taxon>50 kb inversion clade</taxon>
        <taxon>NPAAA clade</taxon>
        <taxon>indigoferoid/millettioid clade</taxon>
        <taxon>Phaseoleae</taxon>
        <taxon>Psophocarpus</taxon>
    </lineage>
</organism>
<feature type="chain" id="PRO_0000105121" description="Basic lectin B1">
    <location>
        <begin position="1"/>
        <end position="14" status="greater than"/>
    </location>
</feature>
<feature type="non-terminal residue">
    <location>
        <position position="14"/>
    </location>
</feature>
<comment type="subunit">
    <text>Dimer of two identical or nearly identical subunits of about 32000 apparent MW.</text>
</comment>
<comment type="PTM">
    <text>Glycosylated; contains about 9% carbohydrate. Heterogeneity in carbohydrate composition may result in different isolectin forms.</text>
</comment>
<accession>P22584</accession>
<keyword id="KW-0903">Direct protein sequencing</keyword>
<keyword id="KW-0325">Glycoprotein</keyword>
<keyword id="KW-0430">Lectin</keyword>
<name>LECB1_PSOSC</name>